<comment type="function">
    <text evidence="1">Catalyzes the oxidation of erythronate-4-phosphate to 3-hydroxy-2-oxo-4-phosphonooxybutanoate.</text>
</comment>
<comment type="catalytic activity">
    <reaction evidence="1">
        <text>4-phospho-D-erythronate + NAD(+) = (R)-3-hydroxy-2-oxo-4-phosphooxybutanoate + NADH + H(+)</text>
        <dbReference type="Rhea" id="RHEA:18829"/>
        <dbReference type="ChEBI" id="CHEBI:15378"/>
        <dbReference type="ChEBI" id="CHEBI:57540"/>
        <dbReference type="ChEBI" id="CHEBI:57945"/>
        <dbReference type="ChEBI" id="CHEBI:58538"/>
        <dbReference type="ChEBI" id="CHEBI:58766"/>
        <dbReference type="EC" id="1.1.1.290"/>
    </reaction>
</comment>
<comment type="pathway">
    <text evidence="1">Cofactor biosynthesis; pyridoxine 5'-phosphate biosynthesis; pyridoxine 5'-phosphate from D-erythrose 4-phosphate: step 2/5.</text>
</comment>
<comment type="subunit">
    <text evidence="1">Homodimer.</text>
</comment>
<comment type="subcellular location">
    <subcellularLocation>
        <location evidence="1">Cytoplasm</location>
    </subcellularLocation>
</comment>
<comment type="similarity">
    <text evidence="1">Belongs to the D-isomer specific 2-hydroxyacid dehydrogenase family. PdxB subfamily.</text>
</comment>
<sequence length="378" mass="41337">MKILVDENMPYARDLFSRLGEVIAVPGRPIPVAQLADADALMVRSVTKVNESLLAGKPIKFVGTATAGTDHVDEAWLKQAGIGFSAAPGCNAIAVVEYVFSSLLMLAERDGFSLHDRTVGIVGVGNVGRRLQARLEALGIKTLLCDPPRADRGDEGDFRSLDELVQRADILTFHTPLFKDGPYKTLHLADEKLIRSLKPGAILINACRGAVVDNTALLTCLNEGQKLSVVLDVWEGEPELNVELLTKVDIGTPHIAGYTLEGKARGTTQVFEAYSKFIGHEQHVALDTLLPAPEFGRITLHGPLDQPTLKRLVHLVYDVRRDDAPLRKVAGIPGEFDKLRKNYLERREWSSLYVICDDASAASLLCKLGFNAVHHPAR</sequence>
<dbReference type="EC" id="1.1.1.290" evidence="1"/>
<dbReference type="EMBL" id="CP000266">
    <property type="protein sequence ID" value="ABF04500.1"/>
    <property type="molecule type" value="Genomic_DNA"/>
</dbReference>
<dbReference type="RefSeq" id="WP_000699105.1">
    <property type="nucleotide sequence ID" value="NC_008258.1"/>
</dbReference>
<dbReference type="SMR" id="Q0T2G5"/>
<dbReference type="KEGG" id="sfv:SFV_2389"/>
<dbReference type="HOGENOM" id="CLU_019796_4_0_6"/>
<dbReference type="UniPathway" id="UPA00244">
    <property type="reaction ID" value="UER00310"/>
</dbReference>
<dbReference type="Proteomes" id="UP000000659">
    <property type="component" value="Chromosome"/>
</dbReference>
<dbReference type="GO" id="GO:0005829">
    <property type="term" value="C:cytosol"/>
    <property type="evidence" value="ECO:0007669"/>
    <property type="project" value="TreeGrafter"/>
</dbReference>
<dbReference type="GO" id="GO:0033711">
    <property type="term" value="F:4-phosphoerythronate dehydrogenase activity"/>
    <property type="evidence" value="ECO:0007669"/>
    <property type="project" value="UniProtKB-EC"/>
</dbReference>
<dbReference type="GO" id="GO:0051287">
    <property type="term" value="F:NAD binding"/>
    <property type="evidence" value="ECO:0007669"/>
    <property type="project" value="InterPro"/>
</dbReference>
<dbReference type="GO" id="GO:0046983">
    <property type="term" value="F:protein dimerization activity"/>
    <property type="evidence" value="ECO:0007669"/>
    <property type="project" value="InterPro"/>
</dbReference>
<dbReference type="GO" id="GO:0036001">
    <property type="term" value="P:'de novo' pyridoxal 5'-phosphate biosynthetic process"/>
    <property type="evidence" value="ECO:0007669"/>
    <property type="project" value="TreeGrafter"/>
</dbReference>
<dbReference type="GO" id="GO:0008615">
    <property type="term" value="P:pyridoxine biosynthetic process"/>
    <property type="evidence" value="ECO:0007669"/>
    <property type="project" value="UniProtKB-UniRule"/>
</dbReference>
<dbReference type="CDD" id="cd12158">
    <property type="entry name" value="ErythrP_dh"/>
    <property type="match status" value="1"/>
</dbReference>
<dbReference type="FunFam" id="3.30.1370.170:FF:000001">
    <property type="entry name" value="Erythronate-4-phosphate dehydrogenase"/>
    <property type="match status" value="1"/>
</dbReference>
<dbReference type="FunFam" id="3.40.50.720:FF:000093">
    <property type="entry name" value="Erythronate-4-phosphate dehydrogenase"/>
    <property type="match status" value="1"/>
</dbReference>
<dbReference type="Gene3D" id="3.30.1370.170">
    <property type="match status" value="1"/>
</dbReference>
<dbReference type="Gene3D" id="3.40.50.720">
    <property type="entry name" value="NAD(P)-binding Rossmann-like Domain"/>
    <property type="match status" value="2"/>
</dbReference>
<dbReference type="HAMAP" id="MF_01825">
    <property type="entry name" value="PdxB"/>
    <property type="match status" value="1"/>
</dbReference>
<dbReference type="InterPro" id="IPR006139">
    <property type="entry name" value="D-isomer_2_OHA_DH_cat_dom"/>
</dbReference>
<dbReference type="InterPro" id="IPR029753">
    <property type="entry name" value="D-isomer_DH_CS"/>
</dbReference>
<dbReference type="InterPro" id="IPR029752">
    <property type="entry name" value="D-isomer_DH_CS1"/>
</dbReference>
<dbReference type="InterPro" id="IPR006140">
    <property type="entry name" value="D-isomer_DH_NAD-bd"/>
</dbReference>
<dbReference type="InterPro" id="IPR020921">
    <property type="entry name" value="Erythronate-4-P_DHase"/>
</dbReference>
<dbReference type="InterPro" id="IPR024531">
    <property type="entry name" value="Erythronate-4-P_DHase_dimer"/>
</dbReference>
<dbReference type="InterPro" id="IPR036291">
    <property type="entry name" value="NAD(P)-bd_dom_sf"/>
</dbReference>
<dbReference type="InterPro" id="IPR038251">
    <property type="entry name" value="PdxB_dimer_sf"/>
</dbReference>
<dbReference type="NCBIfam" id="NF001309">
    <property type="entry name" value="PRK00257.1"/>
    <property type="match status" value="1"/>
</dbReference>
<dbReference type="NCBIfam" id="NF011966">
    <property type="entry name" value="PRK15438.1"/>
    <property type="match status" value="1"/>
</dbReference>
<dbReference type="PANTHER" id="PTHR42938">
    <property type="entry name" value="FORMATE DEHYDROGENASE 1"/>
    <property type="match status" value="1"/>
</dbReference>
<dbReference type="PANTHER" id="PTHR42938:SF9">
    <property type="entry name" value="FORMATE DEHYDROGENASE 1"/>
    <property type="match status" value="1"/>
</dbReference>
<dbReference type="Pfam" id="PF00389">
    <property type="entry name" value="2-Hacid_dh"/>
    <property type="match status" value="1"/>
</dbReference>
<dbReference type="Pfam" id="PF02826">
    <property type="entry name" value="2-Hacid_dh_C"/>
    <property type="match status" value="1"/>
</dbReference>
<dbReference type="Pfam" id="PF11890">
    <property type="entry name" value="DUF3410"/>
    <property type="match status" value="1"/>
</dbReference>
<dbReference type="SUPFAM" id="SSF52283">
    <property type="entry name" value="Formate/glycerate dehydrogenase catalytic domain-like"/>
    <property type="match status" value="1"/>
</dbReference>
<dbReference type="SUPFAM" id="SSF51735">
    <property type="entry name" value="NAD(P)-binding Rossmann-fold domains"/>
    <property type="match status" value="1"/>
</dbReference>
<dbReference type="PROSITE" id="PS00065">
    <property type="entry name" value="D_2_HYDROXYACID_DH_1"/>
    <property type="match status" value="1"/>
</dbReference>
<dbReference type="PROSITE" id="PS00671">
    <property type="entry name" value="D_2_HYDROXYACID_DH_3"/>
    <property type="match status" value="1"/>
</dbReference>
<reference key="1">
    <citation type="journal article" date="2006" name="BMC Genomics">
        <title>Complete genome sequence of Shigella flexneri 5b and comparison with Shigella flexneri 2a.</title>
        <authorList>
            <person name="Nie H."/>
            <person name="Yang F."/>
            <person name="Zhang X."/>
            <person name="Yang J."/>
            <person name="Chen L."/>
            <person name="Wang J."/>
            <person name="Xiong Z."/>
            <person name="Peng J."/>
            <person name="Sun L."/>
            <person name="Dong J."/>
            <person name="Xue Y."/>
            <person name="Xu X."/>
            <person name="Chen S."/>
            <person name="Yao Z."/>
            <person name="Shen Y."/>
            <person name="Jin Q."/>
        </authorList>
    </citation>
    <scope>NUCLEOTIDE SEQUENCE [LARGE SCALE GENOMIC DNA]</scope>
    <source>
        <strain>8401</strain>
    </source>
</reference>
<proteinExistence type="inferred from homology"/>
<keyword id="KW-0963">Cytoplasm</keyword>
<keyword id="KW-0520">NAD</keyword>
<keyword id="KW-0560">Oxidoreductase</keyword>
<keyword id="KW-0664">Pyridoxine biosynthesis</keyword>
<evidence type="ECO:0000255" key="1">
    <source>
        <dbReference type="HAMAP-Rule" id="MF_01825"/>
    </source>
</evidence>
<feature type="chain" id="PRO_0000297475" description="Erythronate-4-phosphate dehydrogenase">
    <location>
        <begin position="1"/>
        <end position="378"/>
    </location>
</feature>
<feature type="active site" evidence="1">
    <location>
        <position position="208"/>
    </location>
</feature>
<feature type="active site" evidence="1">
    <location>
        <position position="237"/>
    </location>
</feature>
<feature type="active site" description="Proton donor" evidence="1">
    <location>
        <position position="254"/>
    </location>
</feature>
<feature type="binding site" evidence="1">
    <location>
        <position position="45"/>
    </location>
    <ligand>
        <name>substrate</name>
    </ligand>
</feature>
<feature type="binding site" evidence="1">
    <location>
        <position position="66"/>
    </location>
    <ligand>
        <name>substrate</name>
    </ligand>
</feature>
<feature type="binding site" evidence="1">
    <location>
        <position position="146"/>
    </location>
    <ligand>
        <name>NAD(+)</name>
        <dbReference type="ChEBI" id="CHEBI:57540"/>
    </ligand>
</feature>
<feature type="binding site" evidence="1">
    <location>
        <position position="175"/>
    </location>
    <ligand>
        <name>NAD(+)</name>
        <dbReference type="ChEBI" id="CHEBI:57540"/>
    </ligand>
</feature>
<feature type="binding site" evidence="1">
    <location>
        <position position="232"/>
    </location>
    <ligand>
        <name>NAD(+)</name>
        <dbReference type="ChEBI" id="CHEBI:57540"/>
    </ligand>
</feature>
<feature type="binding site" evidence="1">
    <location>
        <position position="257"/>
    </location>
    <ligand>
        <name>NAD(+)</name>
        <dbReference type="ChEBI" id="CHEBI:57540"/>
    </ligand>
</feature>
<feature type="binding site" evidence="1">
    <location>
        <position position="258"/>
    </location>
    <ligand>
        <name>substrate</name>
    </ligand>
</feature>
<organism>
    <name type="scientific">Shigella flexneri serotype 5b (strain 8401)</name>
    <dbReference type="NCBI Taxonomy" id="373384"/>
    <lineage>
        <taxon>Bacteria</taxon>
        <taxon>Pseudomonadati</taxon>
        <taxon>Pseudomonadota</taxon>
        <taxon>Gammaproteobacteria</taxon>
        <taxon>Enterobacterales</taxon>
        <taxon>Enterobacteriaceae</taxon>
        <taxon>Shigella</taxon>
    </lineage>
</organism>
<name>PDXB_SHIF8</name>
<protein>
    <recommendedName>
        <fullName evidence="1">Erythronate-4-phosphate dehydrogenase</fullName>
        <ecNumber evidence="1">1.1.1.290</ecNumber>
    </recommendedName>
</protein>
<accession>Q0T2G5</accession>
<gene>
    <name evidence="1" type="primary">pdxB</name>
    <name type="ordered locus">SFV_2389</name>
</gene>